<name>HSLV_BORPE</name>
<proteinExistence type="inferred from homology"/>
<evidence type="ECO:0000255" key="1">
    <source>
        <dbReference type="HAMAP-Rule" id="MF_00248"/>
    </source>
</evidence>
<organism>
    <name type="scientific">Bordetella pertussis (strain Tohama I / ATCC BAA-589 / NCTC 13251)</name>
    <dbReference type="NCBI Taxonomy" id="257313"/>
    <lineage>
        <taxon>Bacteria</taxon>
        <taxon>Pseudomonadati</taxon>
        <taxon>Pseudomonadota</taxon>
        <taxon>Betaproteobacteria</taxon>
        <taxon>Burkholderiales</taxon>
        <taxon>Alcaligenaceae</taxon>
        <taxon>Bordetella</taxon>
    </lineage>
</organism>
<accession>Q7VUK0</accession>
<feature type="chain" id="PRO_0000148090" description="ATP-dependent protease subunit HslV">
    <location>
        <begin position="1"/>
        <end position="179"/>
    </location>
</feature>
<feature type="active site" evidence="1">
    <location>
        <position position="7"/>
    </location>
</feature>
<feature type="binding site" evidence="1">
    <location>
        <position position="162"/>
    </location>
    <ligand>
        <name>Na(+)</name>
        <dbReference type="ChEBI" id="CHEBI:29101"/>
    </ligand>
</feature>
<feature type="binding site" evidence="1">
    <location>
        <position position="165"/>
    </location>
    <ligand>
        <name>Na(+)</name>
        <dbReference type="ChEBI" id="CHEBI:29101"/>
    </ligand>
</feature>
<feature type="binding site" evidence="1">
    <location>
        <position position="168"/>
    </location>
    <ligand>
        <name>Na(+)</name>
        <dbReference type="ChEBI" id="CHEBI:29101"/>
    </ligand>
</feature>
<dbReference type="EC" id="3.4.25.2" evidence="1"/>
<dbReference type="EMBL" id="BX640420">
    <property type="protein sequence ID" value="CAE43355.1"/>
    <property type="molecule type" value="Genomic_DNA"/>
</dbReference>
<dbReference type="RefSeq" id="NP_881657.1">
    <property type="nucleotide sequence ID" value="NC_002929.2"/>
</dbReference>
<dbReference type="RefSeq" id="WP_010931291.1">
    <property type="nucleotide sequence ID" value="NZ_CP039022.1"/>
</dbReference>
<dbReference type="SMR" id="Q7VUK0"/>
<dbReference type="STRING" id="257313.BP3086"/>
<dbReference type="MEROPS" id="T01.006"/>
<dbReference type="PaxDb" id="257313-BP3086"/>
<dbReference type="GeneID" id="69602988"/>
<dbReference type="KEGG" id="bpe:BP3086"/>
<dbReference type="PATRIC" id="fig|257313.5.peg.3335"/>
<dbReference type="eggNOG" id="COG5405">
    <property type="taxonomic scope" value="Bacteria"/>
</dbReference>
<dbReference type="HOGENOM" id="CLU_093872_1_0_4"/>
<dbReference type="Proteomes" id="UP000002676">
    <property type="component" value="Chromosome"/>
</dbReference>
<dbReference type="GO" id="GO:0009376">
    <property type="term" value="C:HslUV protease complex"/>
    <property type="evidence" value="ECO:0007669"/>
    <property type="project" value="UniProtKB-UniRule"/>
</dbReference>
<dbReference type="GO" id="GO:0005839">
    <property type="term" value="C:proteasome core complex"/>
    <property type="evidence" value="ECO:0007669"/>
    <property type="project" value="InterPro"/>
</dbReference>
<dbReference type="GO" id="GO:0046872">
    <property type="term" value="F:metal ion binding"/>
    <property type="evidence" value="ECO:0007669"/>
    <property type="project" value="UniProtKB-KW"/>
</dbReference>
<dbReference type="GO" id="GO:0004298">
    <property type="term" value="F:threonine-type endopeptidase activity"/>
    <property type="evidence" value="ECO:0007669"/>
    <property type="project" value="UniProtKB-KW"/>
</dbReference>
<dbReference type="GO" id="GO:0051603">
    <property type="term" value="P:proteolysis involved in protein catabolic process"/>
    <property type="evidence" value="ECO:0007669"/>
    <property type="project" value="InterPro"/>
</dbReference>
<dbReference type="CDD" id="cd01913">
    <property type="entry name" value="protease_HslV"/>
    <property type="match status" value="1"/>
</dbReference>
<dbReference type="FunFam" id="3.60.20.10:FF:000002">
    <property type="entry name" value="ATP-dependent protease subunit HslV"/>
    <property type="match status" value="1"/>
</dbReference>
<dbReference type="Gene3D" id="3.60.20.10">
    <property type="entry name" value="Glutamine Phosphoribosylpyrophosphate, subunit 1, domain 1"/>
    <property type="match status" value="1"/>
</dbReference>
<dbReference type="HAMAP" id="MF_00248">
    <property type="entry name" value="HslV"/>
    <property type="match status" value="1"/>
</dbReference>
<dbReference type="InterPro" id="IPR022281">
    <property type="entry name" value="ATP-dep_Prtase_HsIV_su"/>
</dbReference>
<dbReference type="InterPro" id="IPR029055">
    <property type="entry name" value="Ntn_hydrolases_N"/>
</dbReference>
<dbReference type="InterPro" id="IPR001353">
    <property type="entry name" value="Proteasome_sua/b"/>
</dbReference>
<dbReference type="InterPro" id="IPR023333">
    <property type="entry name" value="Proteasome_suB-type"/>
</dbReference>
<dbReference type="NCBIfam" id="TIGR03692">
    <property type="entry name" value="ATP_dep_HslV"/>
    <property type="match status" value="1"/>
</dbReference>
<dbReference type="NCBIfam" id="NF003964">
    <property type="entry name" value="PRK05456.1"/>
    <property type="match status" value="1"/>
</dbReference>
<dbReference type="PANTHER" id="PTHR32194:SF0">
    <property type="entry name" value="ATP-DEPENDENT PROTEASE SUBUNIT HSLV"/>
    <property type="match status" value="1"/>
</dbReference>
<dbReference type="PANTHER" id="PTHR32194">
    <property type="entry name" value="METALLOPROTEASE TLDD"/>
    <property type="match status" value="1"/>
</dbReference>
<dbReference type="Pfam" id="PF00227">
    <property type="entry name" value="Proteasome"/>
    <property type="match status" value="1"/>
</dbReference>
<dbReference type="PIRSF" id="PIRSF039093">
    <property type="entry name" value="HslV"/>
    <property type="match status" value="1"/>
</dbReference>
<dbReference type="SUPFAM" id="SSF56235">
    <property type="entry name" value="N-terminal nucleophile aminohydrolases (Ntn hydrolases)"/>
    <property type="match status" value="1"/>
</dbReference>
<dbReference type="PROSITE" id="PS51476">
    <property type="entry name" value="PROTEASOME_BETA_2"/>
    <property type="match status" value="1"/>
</dbReference>
<gene>
    <name evidence="1" type="primary">hslV</name>
    <name type="ordered locus">BP3086</name>
</gene>
<protein>
    <recommendedName>
        <fullName evidence="1">ATP-dependent protease subunit HslV</fullName>
        <ecNumber evidence="1">3.4.25.2</ecNumber>
    </recommendedName>
</protein>
<reference key="1">
    <citation type="journal article" date="2003" name="Nat. Genet.">
        <title>Comparative analysis of the genome sequences of Bordetella pertussis, Bordetella parapertussis and Bordetella bronchiseptica.</title>
        <authorList>
            <person name="Parkhill J."/>
            <person name="Sebaihia M."/>
            <person name="Preston A."/>
            <person name="Murphy L.D."/>
            <person name="Thomson N.R."/>
            <person name="Harris D.E."/>
            <person name="Holden M.T.G."/>
            <person name="Churcher C.M."/>
            <person name="Bentley S.D."/>
            <person name="Mungall K.L."/>
            <person name="Cerdeno-Tarraga A.-M."/>
            <person name="Temple L."/>
            <person name="James K.D."/>
            <person name="Harris B."/>
            <person name="Quail M.A."/>
            <person name="Achtman M."/>
            <person name="Atkin R."/>
            <person name="Baker S."/>
            <person name="Basham D."/>
            <person name="Bason N."/>
            <person name="Cherevach I."/>
            <person name="Chillingworth T."/>
            <person name="Collins M."/>
            <person name="Cronin A."/>
            <person name="Davis P."/>
            <person name="Doggett J."/>
            <person name="Feltwell T."/>
            <person name="Goble A."/>
            <person name="Hamlin N."/>
            <person name="Hauser H."/>
            <person name="Holroyd S."/>
            <person name="Jagels K."/>
            <person name="Leather S."/>
            <person name="Moule S."/>
            <person name="Norberczak H."/>
            <person name="O'Neil S."/>
            <person name="Ormond D."/>
            <person name="Price C."/>
            <person name="Rabbinowitsch E."/>
            <person name="Rutter S."/>
            <person name="Sanders M."/>
            <person name="Saunders D."/>
            <person name="Seeger K."/>
            <person name="Sharp S."/>
            <person name="Simmonds M."/>
            <person name="Skelton J."/>
            <person name="Squares R."/>
            <person name="Squares S."/>
            <person name="Stevens K."/>
            <person name="Unwin L."/>
            <person name="Whitehead S."/>
            <person name="Barrell B.G."/>
            <person name="Maskell D.J."/>
        </authorList>
    </citation>
    <scope>NUCLEOTIDE SEQUENCE [LARGE SCALE GENOMIC DNA]</scope>
    <source>
        <strain>Tohama I / ATCC BAA-589 / NCTC 13251</strain>
    </source>
</reference>
<comment type="function">
    <text evidence="1">Protease subunit of a proteasome-like degradation complex believed to be a general protein degrading machinery.</text>
</comment>
<comment type="catalytic activity">
    <reaction evidence="1">
        <text>ATP-dependent cleavage of peptide bonds with broad specificity.</text>
        <dbReference type="EC" id="3.4.25.2"/>
    </reaction>
</comment>
<comment type="activity regulation">
    <text evidence="1">Allosterically activated by HslU binding.</text>
</comment>
<comment type="subunit">
    <text evidence="1">A double ring-shaped homohexamer of HslV is capped on each side by a ring-shaped HslU homohexamer. The assembly of the HslU/HslV complex is dependent on binding of ATP.</text>
</comment>
<comment type="subcellular location">
    <subcellularLocation>
        <location evidence="1">Cytoplasm</location>
    </subcellularLocation>
</comment>
<comment type="similarity">
    <text evidence="1">Belongs to the peptidase T1B family. HslV subfamily.</text>
</comment>
<keyword id="KW-0021">Allosteric enzyme</keyword>
<keyword id="KW-0963">Cytoplasm</keyword>
<keyword id="KW-0378">Hydrolase</keyword>
<keyword id="KW-0479">Metal-binding</keyword>
<keyword id="KW-0645">Protease</keyword>
<keyword id="KW-1185">Reference proteome</keyword>
<keyword id="KW-0915">Sodium</keyword>
<keyword id="KW-0888">Threonine protease</keyword>
<sequence length="179" mass="19470">MEQFHATTIVCVRRGNHVALGGDGQVTLGNIVIKGTVRKIRRLYHDKVLAGFAGATADAFTLQERFEAKLEKHQGHLMRAAVELTRDWRTDRVLRRLEAMLIVADTEHTLVLTGNGDVLEPEHGLAAIGSGGAYAQSAALALLRNTELPPEAIVKQSLEIAGDLCIYTNQNHVIETLGA</sequence>